<reference key="1">
    <citation type="journal article" date="1995" name="Arch. Biochem. Biophys.">
        <title>Cloning, expression, and characterization of (+)-delta-cadinene synthase: a catalyst for cotton phytoalexin biosynthesis.</title>
        <authorList>
            <person name="Chen X.-Y."/>
            <person name="Chen Y."/>
            <person name="Heinstein P."/>
            <person name="Davisson V.J."/>
        </authorList>
    </citation>
    <scope>NUCLEOTIDE SEQUENCE [MRNA]</scope>
    <scope>FUNCTION</scope>
    <scope>CATALYTIC ACTIVITY</scope>
    <source>
        <strain>cv. Nanking</strain>
    </source>
</reference>
<proteinExistence type="evidence at protein level"/>
<protein>
    <recommendedName>
        <fullName evidence="5">(+)-delta-cadinene synthase isozyme XC14</fullName>
        <shortName evidence="6">D-cadinene synthase XC14</shortName>
        <ecNumber evidence="4">4.2.3.13</ecNumber>
    </recommendedName>
</protein>
<evidence type="ECO:0000250" key="1"/>
<evidence type="ECO:0000250" key="2">
    <source>
        <dbReference type="UniProtKB" id="Q40577"/>
    </source>
</evidence>
<evidence type="ECO:0000256" key="3">
    <source>
        <dbReference type="SAM" id="MobiDB-lite"/>
    </source>
</evidence>
<evidence type="ECO:0000269" key="4">
    <source>
    </source>
</evidence>
<evidence type="ECO:0000303" key="5">
    <source>
    </source>
</evidence>
<evidence type="ECO:0000305" key="6"/>
<dbReference type="EC" id="4.2.3.13" evidence="4"/>
<dbReference type="EMBL" id="U23205">
    <property type="protein sequence ID" value="AAA93065.1"/>
    <property type="molecule type" value="mRNA"/>
</dbReference>
<dbReference type="PIR" id="S68366">
    <property type="entry name" value="S68366"/>
</dbReference>
<dbReference type="RefSeq" id="NP_001316936.1">
    <property type="nucleotide sequence ID" value="NM_001330007.1"/>
</dbReference>
<dbReference type="SMR" id="Q39760"/>
<dbReference type="GeneID" id="108450450"/>
<dbReference type="KEGG" id="ag:AAA93065"/>
<dbReference type="OrthoDB" id="27403at41938"/>
<dbReference type="BRENDA" id="4.2.3.13">
    <property type="organism ID" value="2497"/>
</dbReference>
<dbReference type="UniPathway" id="UPA00213"/>
<dbReference type="GO" id="GO:0047461">
    <property type="term" value="F:(+)-delta-cadinene synthase activity"/>
    <property type="evidence" value="ECO:0000314"/>
    <property type="project" value="AgBase"/>
</dbReference>
<dbReference type="GO" id="GO:0000287">
    <property type="term" value="F:magnesium ion binding"/>
    <property type="evidence" value="ECO:0007669"/>
    <property type="project" value="InterPro"/>
</dbReference>
<dbReference type="GO" id="GO:0016102">
    <property type="term" value="P:diterpenoid biosynthetic process"/>
    <property type="evidence" value="ECO:0007669"/>
    <property type="project" value="InterPro"/>
</dbReference>
<dbReference type="GO" id="GO:0009620">
    <property type="term" value="P:response to fungus"/>
    <property type="evidence" value="ECO:0000314"/>
    <property type="project" value="AgBase"/>
</dbReference>
<dbReference type="CDD" id="cd00684">
    <property type="entry name" value="Terpene_cyclase_plant_C1"/>
    <property type="match status" value="1"/>
</dbReference>
<dbReference type="FunFam" id="1.10.600.10:FF:000007">
    <property type="entry name" value="Isoprene synthase, chloroplastic"/>
    <property type="match status" value="1"/>
</dbReference>
<dbReference type="FunFam" id="1.50.10.130:FF:000001">
    <property type="entry name" value="Isoprene synthase, chloroplastic"/>
    <property type="match status" value="1"/>
</dbReference>
<dbReference type="Gene3D" id="1.10.600.10">
    <property type="entry name" value="Farnesyl Diphosphate Synthase"/>
    <property type="match status" value="1"/>
</dbReference>
<dbReference type="Gene3D" id="1.50.10.130">
    <property type="entry name" value="Terpene synthase, N-terminal domain"/>
    <property type="match status" value="1"/>
</dbReference>
<dbReference type="InterPro" id="IPR008949">
    <property type="entry name" value="Isoprenoid_synthase_dom_sf"/>
</dbReference>
<dbReference type="InterPro" id="IPR044814">
    <property type="entry name" value="Terpene_cyclase_plant_C1"/>
</dbReference>
<dbReference type="InterPro" id="IPR001906">
    <property type="entry name" value="Terpene_synth_N"/>
</dbReference>
<dbReference type="InterPro" id="IPR036965">
    <property type="entry name" value="Terpene_synth_N_sf"/>
</dbReference>
<dbReference type="InterPro" id="IPR050148">
    <property type="entry name" value="Terpene_synthase-like"/>
</dbReference>
<dbReference type="InterPro" id="IPR005630">
    <property type="entry name" value="Terpene_synthase_metal-bd"/>
</dbReference>
<dbReference type="InterPro" id="IPR008930">
    <property type="entry name" value="Terpenoid_cyclase/PrenylTrfase"/>
</dbReference>
<dbReference type="PANTHER" id="PTHR31225:SF215">
    <property type="entry name" value="(+)-DELTA-CADINENE SYNTHASE"/>
    <property type="match status" value="1"/>
</dbReference>
<dbReference type="PANTHER" id="PTHR31225">
    <property type="entry name" value="OS04G0344100 PROTEIN-RELATED"/>
    <property type="match status" value="1"/>
</dbReference>
<dbReference type="Pfam" id="PF01397">
    <property type="entry name" value="Terpene_synth"/>
    <property type="match status" value="1"/>
</dbReference>
<dbReference type="Pfam" id="PF03936">
    <property type="entry name" value="Terpene_synth_C"/>
    <property type="match status" value="1"/>
</dbReference>
<dbReference type="SFLD" id="SFLDS00005">
    <property type="entry name" value="Isoprenoid_Synthase_Type_I"/>
    <property type="match status" value="1"/>
</dbReference>
<dbReference type="SFLD" id="SFLDG01604">
    <property type="entry name" value="Terpene_Cyclase_Like_1_C_Termi"/>
    <property type="match status" value="1"/>
</dbReference>
<dbReference type="SFLD" id="SFLDG01014">
    <property type="entry name" value="Terpene_Cyclase_Like_1_N-term"/>
    <property type="match status" value="1"/>
</dbReference>
<dbReference type="SUPFAM" id="SSF48239">
    <property type="entry name" value="Terpenoid cyclases/Protein prenyltransferases"/>
    <property type="match status" value="1"/>
</dbReference>
<dbReference type="SUPFAM" id="SSF48576">
    <property type="entry name" value="Terpenoid synthases"/>
    <property type="match status" value="1"/>
</dbReference>
<comment type="function">
    <text evidence="4">Responsible for the cyclization of trans,trans-farnesyl diphosphate (FPP) to (+)-delta cadinene.</text>
</comment>
<comment type="catalytic activity">
    <reaction evidence="4">
        <text>(2E,6E)-farnesyl diphosphate = (1S,8aR)-delta-cadinene + diphosphate</text>
        <dbReference type="Rhea" id="RHEA:19525"/>
        <dbReference type="ChEBI" id="CHEBI:15385"/>
        <dbReference type="ChEBI" id="CHEBI:33019"/>
        <dbReference type="ChEBI" id="CHEBI:175763"/>
        <dbReference type="EC" id="4.2.3.13"/>
    </reaction>
    <physiologicalReaction direction="left-to-right" evidence="4">
        <dbReference type="Rhea" id="RHEA:19526"/>
    </physiologicalReaction>
</comment>
<comment type="cofactor">
    <cofactor evidence="4">
        <name>Mg(2+)</name>
        <dbReference type="ChEBI" id="CHEBI:18420"/>
    </cofactor>
    <text evidence="1">Binds 3 Mg(2+) ions per subunit.</text>
</comment>
<comment type="pathway">
    <text evidence="6">Secondary metabolite biosynthesis; terpenoid biosynthesis.</text>
</comment>
<comment type="domain">
    <text evidence="6">The Asp-Asp-Xaa-Xaa-Asp/Glu (DDXXD/E) motif is important for the catalytic activity, presumably through binding to Mg(2+).</text>
</comment>
<comment type="similarity">
    <text evidence="6">Belongs to the terpene synthase family.</text>
</comment>
<feature type="chain" id="PRO_0000186440" description="(+)-delta-cadinene synthase isozyme XC14">
    <location>
        <begin position="1"/>
        <end position="554"/>
    </location>
</feature>
<feature type="region of interest" description="Disordered" evidence="3">
    <location>
        <begin position="1"/>
        <end position="23"/>
    </location>
</feature>
<feature type="short sequence motif" description="DDXXD motif" evidence="6">
    <location>
        <begin position="307"/>
        <end position="311"/>
    </location>
</feature>
<feature type="compositionally biased region" description="Low complexity" evidence="3">
    <location>
        <begin position="1"/>
        <end position="16"/>
    </location>
</feature>
<feature type="binding site" evidence="2">
    <location>
        <position position="307"/>
    </location>
    <ligand>
        <name>Mg(2+)</name>
        <dbReference type="ChEBI" id="CHEBI:18420"/>
        <label>1</label>
    </ligand>
</feature>
<feature type="binding site" evidence="2">
    <location>
        <position position="307"/>
    </location>
    <ligand>
        <name>Mg(2+)</name>
        <dbReference type="ChEBI" id="CHEBI:18420"/>
        <label>2</label>
    </ligand>
</feature>
<feature type="binding site" evidence="2">
    <location>
        <position position="311"/>
    </location>
    <ligand>
        <name>Mg(2+)</name>
        <dbReference type="ChEBI" id="CHEBI:18420"/>
        <label>1</label>
    </ligand>
</feature>
<feature type="binding site" evidence="2">
    <location>
        <position position="311"/>
    </location>
    <ligand>
        <name>Mg(2+)</name>
        <dbReference type="ChEBI" id="CHEBI:18420"/>
        <label>2</label>
    </ligand>
</feature>
<feature type="binding site" evidence="2">
    <location>
        <position position="451"/>
    </location>
    <ligand>
        <name>Mg(2+)</name>
        <dbReference type="ChEBI" id="CHEBI:18420"/>
        <label>3</label>
    </ligand>
</feature>
<keyword id="KW-0456">Lyase</keyword>
<keyword id="KW-0460">Magnesium</keyword>
<keyword id="KW-0479">Metal-binding</keyword>
<accession>Q39760</accession>
<sequence length="554" mass="64159">MASQVSQMPSSSPLSSNKDEMRPKADFQPSIWGDLFLNCPDKNIDAETEKRHQQLKEEVRKMIVAPMANSTQKLAFIDSVQRLGVSYHFTKEIEDELENIYHNNNDAENDLYTTSLRFRLLREHGFNVSCDVFNKFKDEQGNFKSSVTSDVRGLLELYQASYLRVHGEDILDEAISFTTNHLSLAVASLDYPLSEEVSHALKQSIRRGLPRVEARHYLSVYQDIESHNKVLLEFAKIDFNMVQLLHRKELSEISRWWKDLDFQRKLPYARDRVVEGYFWISGVYFEPQYSLGRKMLTKVIAMASIVDDTYDSYATYEELIPYTKAIERWDIKCIDELPEYMKPSYKALLDVYEEMEQLVAKHGRQYRVEYAKNAMIRLAQSYLVEARWTLQNYKPSFEEFKANALPTCGYAMLAITSFVGMGDIVTPETFKWAANDPKIIQASTIICRFMDDVAEHKFKHRREDDCSAIECYMEEYGVTAQEAYDVFNKHVESAWKDVNKEFLKPTEMPTEVLNRSLNLARVMDVLYREGDGYTYVGKAAKGGITSLLIEPVAL</sequence>
<organism>
    <name type="scientific">Gossypium arboreum</name>
    <name type="common">Tree cotton</name>
    <name type="synonym">Gossypium nanking</name>
    <dbReference type="NCBI Taxonomy" id="29729"/>
    <lineage>
        <taxon>Eukaryota</taxon>
        <taxon>Viridiplantae</taxon>
        <taxon>Streptophyta</taxon>
        <taxon>Embryophyta</taxon>
        <taxon>Tracheophyta</taxon>
        <taxon>Spermatophyta</taxon>
        <taxon>Magnoliopsida</taxon>
        <taxon>eudicotyledons</taxon>
        <taxon>Gunneridae</taxon>
        <taxon>Pentapetalae</taxon>
        <taxon>rosids</taxon>
        <taxon>malvids</taxon>
        <taxon>Malvales</taxon>
        <taxon>Malvaceae</taxon>
        <taxon>Malvoideae</taxon>
        <taxon>Gossypium</taxon>
    </lineage>
</organism>
<name>DCS2_GOSAR</name>